<keyword id="KW-0002">3D-structure</keyword>
<keyword id="KW-0963">Cytoplasm</keyword>
<keyword id="KW-0238">DNA-binding</keyword>
<keyword id="KW-1185">Reference proteome</keyword>
<keyword id="KW-0731">Sigma factor</keyword>
<keyword id="KW-0804">Transcription</keyword>
<keyword id="KW-0805">Transcription regulation</keyword>
<dbReference type="EMBL" id="D90118">
    <property type="protein sequence ID" value="BAA14146.1"/>
    <property type="molecule type" value="Genomic_DNA"/>
</dbReference>
<dbReference type="EMBL" id="AE004091">
    <property type="protein sequence ID" value="AAG03965.1"/>
    <property type="molecule type" value="Genomic_DNA"/>
</dbReference>
<dbReference type="PIR" id="S15900">
    <property type="entry name" value="RNPS7A"/>
</dbReference>
<dbReference type="RefSeq" id="NP_249267.1">
    <property type="nucleotide sequence ID" value="NC_002516.2"/>
</dbReference>
<dbReference type="RefSeq" id="WP_003085035.1">
    <property type="nucleotide sequence ID" value="NZ_QZGE01000010.1"/>
</dbReference>
<dbReference type="PDB" id="7XYA">
    <property type="method" value="EM"/>
    <property type="resolution" value="3.30 A"/>
    <property type="chains" value="F=1-617"/>
</dbReference>
<dbReference type="PDBsum" id="7XYA"/>
<dbReference type="EMDB" id="EMD-33515"/>
<dbReference type="SMR" id="P26480"/>
<dbReference type="FunCoup" id="P26480">
    <property type="interactions" value="372"/>
</dbReference>
<dbReference type="IntAct" id="P26480">
    <property type="interactions" value="3"/>
</dbReference>
<dbReference type="STRING" id="208964.PA0576"/>
<dbReference type="PaxDb" id="208964-PA0576"/>
<dbReference type="GeneID" id="882038"/>
<dbReference type="KEGG" id="pae:PA0576"/>
<dbReference type="PATRIC" id="fig|208964.12.peg.610"/>
<dbReference type="PseudoCAP" id="PA0576"/>
<dbReference type="HOGENOM" id="CLU_014793_7_2_6"/>
<dbReference type="InParanoid" id="P26480"/>
<dbReference type="OrthoDB" id="9809557at2"/>
<dbReference type="PhylomeDB" id="P26480"/>
<dbReference type="BioCyc" id="PAER208964:G1FZ6-583-MONOMER"/>
<dbReference type="Proteomes" id="UP000002438">
    <property type="component" value="Chromosome"/>
</dbReference>
<dbReference type="GO" id="GO:0005737">
    <property type="term" value="C:cytoplasm"/>
    <property type="evidence" value="ECO:0007669"/>
    <property type="project" value="UniProtKB-SubCell"/>
</dbReference>
<dbReference type="GO" id="GO:0003677">
    <property type="term" value="F:DNA binding"/>
    <property type="evidence" value="ECO:0007669"/>
    <property type="project" value="UniProtKB-UniRule"/>
</dbReference>
<dbReference type="GO" id="GO:0016987">
    <property type="term" value="F:sigma factor activity"/>
    <property type="evidence" value="ECO:0007669"/>
    <property type="project" value="UniProtKB-UniRule"/>
</dbReference>
<dbReference type="GO" id="GO:0006352">
    <property type="term" value="P:DNA-templated transcription initiation"/>
    <property type="evidence" value="ECO:0007669"/>
    <property type="project" value="UniProtKB-UniRule"/>
</dbReference>
<dbReference type="CDD" id="cd06171">
    <property type="entry name" value="Sigma70_r4"/>
    <property type="match status" value="1"/>
</dbReference>
<dbReference type="FunFam" id="1.10.220.120:FF:000001">
    <property type="entry name" value="RNA polymerase sigma factor RpoD"/>
    <property type="match status" value="1"/>
</dbReference>
<dbReference type="FunFam" id="1.10.601.10:FF:000002">
    <property type="entry name" value="RNA polymerase sigma factor RpoD"/>
    <property type="match status" value="1"/>
</dbReference>
<dbReference type="FunFam" id="1.10.10.10:FF:000002">
    <property type="entry name" value="RNA polymerase sigma factor SigA"/>
    <property type="match status" value="1"/>
</dbReference>
<dbReference type="FunFam" id="1.10.10.10:FF:000004">
    <property type="entry name" value="RNA polymerase sigma factor SigA"/>
    <property type="match status" value="1"/>
</dbReference>
<dbReference type="Gene3D" id="1.10.601.10">
    <property type="entry name" value="RNA Polymerase Primary Sigma Factor"/>
    <property type="match status" value="1"/>
</dbReference>
<dbReference type="Gene3D" id="1.10.220.120">
    <property type="entry name" value="Sigma-70 factor, region 1.1"/>
    <property type="match status" value="1"/>
</dbReference>
<dbReference type="Gene3D" id="1.10.10.10">
    <property type="entry name" value="Winged helix-like DNA-binding domain superfamily/Winged helix DNA-binding domain"/>
    <property type="match status" value="2"/>
</dbReference>
<dbReference type="HAMAP" id="MF_00963">
    <property type="entry name" value="Sigma70_RpoD_SigA"/>
    <property type="match status" value="1"/>
</dbReference>
<dbReference type="InterPro" id="IPR014284">
    <property type="entry name" value="RNA_pol_sigma-70_dom"/>
</dbReference>
<dbReference type="InterPro" id="IPR000943">
    <property type="entry name" value="RNA_pol_sigma70"/>
</dbReference>
<dbReference type="InterPro" id="IPR009042">
    <property type="entry name" value="RNA_pol_sigma70_r1_2"/>
</dbReference>
<dbReference type="InterPro" id="IPR007627">
    <property type="entry name" value="RNA_pol_sigma70_r2"/>
</dbReference>
<dbReference type="InterPro" id="IPR007624">
    <property type="entry name" value="RNA_pol_sigma70_r3"/>
</dbReference>
<dbReference type="InterPro" id="IPR007630">
    <property type="entry name" value="RNA_pol_sigma70_r4"/>
</dbReference>
<dbReference type="InterPro" id="IPR007631">
    <property type="entry name" value="RNA_pol_sigma_70_non-ess"/>
</dbReference>
<dbReference type="InterPro" id="IPR007127">
    <property type="entry name" value="RNA_pol_sigma_70_r1_1"/>
</dbReference>
<dbReference type="InterPro" id="IPR042189">
    <property type="entry name" value="RNA_pol_sigma_70_r1_1_sf"/>
</dbReference>
<dbReference type="InterPro" id="IPR013325">
    <property type="entry name" value="RNA_pol_sigma_r2"/>
</dbReference>
<dbReference type="InterPro" id="IPR013324">
    <property type="entry name" value="RNA_pol_sigma_r3/r4-like"/>
</dbReference>
<dbReference type="InterPro" id="IPR012760">
    <property type="entry name" value="RNA_pol_sigma_RpoD_C"/>
</dbReference>
<dbReference type="InterPro" id="IPR050239">
    <property type="entry name" value="Sigma-70_RNA_pol_init_factors"/>
</dbReference>
<dbReference type="InterPro" id="IPR028630">
    <property type="entry name" value="Sigma70_RpoD"/>
</dbReference>
<dbReference type="InterPro" id="IPR036388">
    <property type="entry name" value="WH-like_DNA-bd_sf"/>
</dbReference>
<dbReference type="NCBIfam" id="NF004208">
    <property type="entry name" value="PRK05658.1"/>
    <property type="match status" value="1"/>
</dbReference>
<dbReference type="NCBIfam" id="TIGR02393">
    <property type="entry name" value="RpoD_Cterm"/>
    <property type="match status" value="1"/>
</dbReference>
<dbReference type="NCBIfam" id="TIGR02937">
    <property type="entry name" value="sigma70-ECF"/>
    <property type="match status" value="1"/>
</dbReference>
<dbReference type="PANTHER" id="PTHR30603">
    <property type="entry name" value="RNA POLYMERASE SIGMA FACTOR RPO"/>
    <property type="match status" value="1"/>
</dbReference>
<dbReference type="PANTHER" id="PTHR30603:SF60">
    <property type="entry name" value="RNA POLYMERASE SIGMA FACTOR RPOD"/>
    <property type="match status" value="1"/>
</dbReference>
<dbReference type="Pfam" id="PF04546">
    <property type="entry name" value="Sigma70_ner"/>
    <property type="match status" value="1"/>
</dbReference>
<dbReference type="Pfam" id="PF03979">
    <property type="entry name" value="Sigma70_r1_1"/>
    <property type="match status" value="1"/>
</dbReference>
<dbReference type="Pfam" id="PF00140">
    <property type="entry name" value="Sigma70_r1_2"/>
    <property type="match status" value="1"/>
</dbReference>
<dbReference type="Pfam" id="PF04542">
    <property type="entry name" value="Sigma70_r2"/>
    <property type="match status" value="1"/>
</dbReference>
<dbReference type="Pfam" id="PF04539">
    <property type="entry name" value="Sigma70_r3"/>
    <property type="match status" value="1"/>
</dbReference>
<dbReference type="Pfam" id="PF04545">
    <property type="entry name" value="Sigma70_r4"/>
    <property type="match status" value="1"/>
</dbReference>
<dbReference type="PRINTS" id="PR00046">
    <property type="entry name" value="SIGMA70FCT"/>
</dbReference>
<dbReference type="SUPFAM" id="SSF88946">
    <property type="entry name" value="Sigma2 domain of RNA polymerase sigma factors"/>
    <property type="match status" value="1"/>
</dbReference>
<dbReference type="SUPFAM" id="SSF88659">
    <property type="entry name" value="Sigma3 and sigma4 domains of RNA polymerase sigma factors"/>
    <property type="match status" value="2"/>
</dbReference>
<dbReference type="PROSITE" id="PS00715">
    <property type="entry name" value="SIGMA70_1"/>
    <property type="match status" value="1"/>
</dbReference>
<dbReference type="PROSITE" id="PS00716">
    <property type="entry name" value="SIGMA70_2"/>
    <property type="match status" value="1"/>
</dbReference>
<organism>
    <name type="scientific">Pseudomonas aeruginosa (strain ATCC 15692 / DSM 22644 / CIP 104116 / JCM 14847 / LMG 12228 / 1C / PRS 101 / PAO1)</name>
    <dbReference type="NCBI Taxonomy" id="208964"/>
    <lineage>
        <taxon>Bacteria</taxon>
        <taxon>Pseudomonadati</taxon>
        <taxon>Pseudomonadota</taxon>
        <taxon>Gammaproteobacteria</taxon>
        <taxon>Pseudomonadales</taxon>
        <taxon>Pseudomonadaceae</taxon>
        <taxon>Pseudomonas</taxon>
    </lineage>
</organism>
<protein>
    <recommendedName>
        <fullName evidence="1">RNA polymerase sigma factor RpoD</fullName>
    </recommendedName>
    <alternativeName>
        <fullName evidence="1">Sigma-70</fullName>
    </alternativeName>
</protein>
<name>RPOD_PSEAE</name>
<evidence type="ECO:0000255" key="1">
    <source>
        <dbReference type="HAMAP-Rule" id="MF_00963"/>
    </source>
</evidence>
<evidence type="ECO:0000256" key="2">
    <source>
        <dbReference type="SAM" id="MobiDB-lite"/>
    </source>
</evidence>
<evidence type="ECO:0007829" key="3">
    <source>
        <dbReference type="PDB" id="7XYA"/>
    </source>
</evidence>
<comment type="function">
    <text evidence="1">Sigma factors are initiation factors that promote the attachment of RNA polymerase to specific initiation sites and are then released. This sigma factor is the primary sigma factor during exponential growth.</text>
</comment>
<comment type="subunit">
    <text evidence="1">Interacts transiently with the RNA polymerase catalytic core.</text>
</comment>
<comment type="subcellular location">
    <subcellularLocation>
        <location evidence="1">Cytoplasm</location>
    </subcellularLocation>
</comment>
<comment type="similarity">
    <text evidence="1">Belongs to the sigma-70 factor family. RpoD/SigA subfamily.</text>
</comment>
<proteinExistence type="evidence at protein level"/>
<sequence>MSGKAQQQSRLKELIARGREQGYLTYAEVNDHLPEDISDPEQVEDIIRMINDMGINVFETAPDADALLLAEADTDEAAAEEAAAALAAVESDIGRTTDPVRMYMREMGTVELLTREGEIEIAKRIEEGIREVMSAIAQFPGTVDSILADYNRIVAEGGRLSDVLSGYIDPDDGSLPAEEVEPVNLKDDSADSKEKDDEEEESDDSSDSDDEGDGGPDPEEARLRFTAVSEQLDKAKKALKKHGRGSKQATAELTGLAELFMPIKLVPKQFDALVARVRSALEGVRAQERAIMQLCVRDARMPRADFLRLFPNHETDEKWVDSVLKSKPKYAEAIERLRDDILRNQQKLAALESEVELTVAEIKEINRAMSIGEAKARRAKKEMVEANLRLVISIAKKYTNRGLQFLDLIQEGNIGLMKAVDKFEYRRGYKFSTYATWWIRQAITRSIADQARTIRIPVHMIETINKLNRISRQMLQEMGREPTPEELGERMDMPEDKIRKVLKIAKEPISMETPIGDDEDSHLGDFIEDSTMQSPIEMATSESLKESTREVLAGLTAREAKVLRMRFGIDMNTDHTLEEVGKQFDVTRERIRQIEAKALRKLRHPSRSEHLRSFLDE</sequence>
<reference key="1">
    <citation type="journal article" date="1991" name="Biochim. Biophys. Acta">
        <title>Cloning and analysis of the gene (rpoDA) for the principal sigma factor of Pseudomonas aeruginosa.</title>
        <authorList>
            <person name="Tanaka K."/>
            <person name="Takahashi H."/>
        </authorList>
    </citation>
    <scope>NUCLEOTIDE SEQUENCE [GENOMIC DNA]</scope>
</reference>
<reference key="2">
    <citation type="journal article" date="2000" name="Nature">
        <title>Complete genome sequence of Pseudomonas aeruginosa PAO1, an opportunistic pathogen.</title>
        <authorList>
            <person name="Stover C.K."/>
            <person name="Pham X.-Q.T."/>
            <person name="Erwin A.L."/>
            <person name="Mizoguchi S.D."/>
            <person name="Warrener P."/>
            <person name="Hickey M.J."/>
            <person name="Brinkman F.S.L."/>
            <person name="Hufnagle W.O."/>
            <person name="Kowalik D.J."/>
            <person name="Lagrou M."/>
            <person name="Garber R.L."/>
            <person name="Goltry L."/>
            <person name="Tolentino E."/>
            <person name="Westbrock-Wadman S."/>
            <person name="Yuan Y."/>
            <person name="Brody L.L."/>
            <person name="Coulter S.N."/>
            <person name="Folger K.R."/>
            <person name="Kas A."/>
            <person name="Larbig K."/>
            <person name="Lim R.M."/>
            <person name="Smith K.A."/>
            <person name="Spencer D.H."/>
            <person name="Wong G.K.-S."/>
            <person name="Wu Z."/>
            <person name="Paulsen I.T."/>
            <person name="Reizer J."/>
            <person name="Saier M.H. Jr."/>
            <person name="Hancock R.E.W."/>
            <person name="Lory S."/>
            <person name="Olson M.V."/>
        </authorList>
    </citation>
    <scope>NUCLEOTIDE SEQUENCE [LARGE SCALE GENOMIC DNA]</scope>
    <source>
        <strain>ATCC 15692 / DSM 22644 / CIP 104116 / JCM 14847 / LMG 12228 / 1C / PRS 101 / PAO1</strain>
    </source>
</reference>
<gene>
    <name evidence="1" type="primary">rpoD</name>
    <name type="synonym">rpoDA</name>
    <name type="ordered locus">PA0576</name>
</gene>
<feature type="chain" id="PRO_0000093905" description="RNA polymerase sigma factor RpoD">
    <location>
        <begin position="1"/>
        <end position="617"/>
    </location>
</feature>
<feature type="DNA-binding region" description="H-T-H motif" evidence="1">
    <location>
        <begin position="577"/>
        <end position="596"/>
    </location>
</feature>
<feature type="region of interest" description="Disordered" evidence="2">
    <location>
        <begin position="170"/>
        <end position="220"/>
    </location>
</feature>
<feature type="region of interest" description="Sigma-70 factor domain-2" evidence="1">
    <location>
        <begin position="383"/>
        <end position="453"/>
    </location>
</feature>
<feature type="region of interest" description="Sigma-70 factor domain-3" evidence="1">
    <location>
        <begin position="462"/>
        <end position="538"/>
    </location>
</feature>
<feature type="region of interest" description="Sigma-70 factor domain-4" evidence="1">
    <location>
        <begin position="551"/>
        <end position="604"/>
    </location>
</feature>
<feature type="short sequence motif" description="Interaction with polymerase core subunit RpoC">
    <location>
        <begin position="407"/>
        <end position="410"/>
    </location>
</feature>
<feature type="compositionally biased region" description="Basic and acidic residues" evidence="2">
    <location>
        <begin position="184"/>
        <end position="195"/>
    </location>
</feature>
<feature type="compositionally biased region" description="Acidic residues" evidence="2">
    <location>
        <begin position="196"/>
        <end position="218"/>
    </location>
</feature>
<feature type="helix" evidence="3">
    <location>
        <begin position="99"/>
        <end position="108"/>
    </location>
</feature>
<feature type="helix" evidence="3">
    <location>
        <begin position="115"/>
        <end position="137"/>
    </location>
</feature>
<feature type="helix" evidence="3">
    <location>
        <begin position="140"/>
        <end position="154"/>
    </location>
</feature>
<feature type="helix" evidence="3">
    <location>
        <begin position="160"/>
        <end position="162"/>
    </location>
</feature>
<feature type="helix" evidence="3">
    <location>
        <begin position="218"/>
        <end position="237"/>
    </location>
</feature>
<feature type="helix" evidence="3">
    <location>
        <begin position="248"/>
        <end position="260"/>
    </location>
</feature>
<feature type="helix" evidence="3">
    <location>
        <begin position="267"/>
        <end position="299"/>
    </location>
</feature>
<feature type="helix" evidence="3">
    <location>
        <begin position="303"/>
        <end position="309"/>
    </location>
</feature>
<feature type="turn" evidence="3">
    <location>
        <begin position="311"/>
        <end position="313"/>
    </location>
</feature>
<feature type="helix" evidence="3">
    <location>
        <begin position="318"/>
        <end position="326"/>
    </location>
</feature>
<feature type="helix" evidence="3">
    <location>
        <begin position="329"/>
        <end position="334"/>
    </location>
</feature>
<feature type="helix" evidence="3">
    <location>
        <begin position="335"/>
        <end position="337"/>
    </location>
</feature>
<feature type="helix" evidence="3">
    <location>
        <begin position="338"/>
        <end position="355"/>
    </location>
</feature>
<feature type="helix" evidence="3">
    <location>
        <begin position="359"/>
        <end position="395"/>
    </location>
</feature>
<feature type="helix" evidence="3">
    <location>
        <begin position="396"/>
        <end position="398"/>
    </location>
</feature>
<feature type="turn" evidence="3">
    <location>
        <begin position="399"/>
        <end position="402"/>
    </location>
</feature>
<feature type="helix" evidence="3">
    <location>
        <begin position="405"/>
        <end position="421"/>
    </location>
</feature>
<feature type="helix" evidence="3">
    <location>
        <begin position="431"/>
        <end position="449"/>
    </location>
</feature>
<accession>P26480</accession>